<gene>
    <name type="primary">mRpL32</name>
    <name type="ORF">CG12220</name>
</gene>
<sequence>MSRNLFLSITNFIRNLESLFLPHGGHPPALALAGFQHDHSPKSSQEFSLKQLIGDGLLWAVPKHRRSVEKRLKRKFGYPEYNWKPLREKRNLRSCLQCGHDHEMGVLCPFCYQKVLKETELMQSKIQETLGLDPVDKEVIVLYEGEKAEQSTDDLKNKRIVEMKKPRPMWFTKNLLQKSTQQLSETKEVKPSDLA</sequence>
<reference key="1">
    <citation type="journal article" date="2000" name="Science">
        <title>The genome sequence of Drosophila melanogaster.</title>
        <authorList>
            <person name="Adams M.D."/>
            <person name="Celniker S.E."/>
            <person name="Holt R.A."/>
            <person name="Evans C.A."/>
            <person name="Gocayne J.D."/>
            <person name="Amanatides P.G."/>
            <person name="Scherer S.E."/>
            <person name="Li P.W."/>
            <person name="Hoskins R.A."/>
            <person name="Galle R.F."/>
            <person name="George R.A."/>
            <person name="Lewis S.E."/>
            <person name="Richards S."/>
            <person name="Ashburner M."/>
            <person name="Henderson S.N."/>
            <person name="Sutton G.G."/>
            <person name="Wortman J.R."/>
            <person name="Yandell M.D."/>
            <person name="Zhang Q."/>
            <person name="Chen L.X."/>
            <person name="Brandon R.C."/>
            <person name="Rogers Y.-H.C."/>
            <person name="Blazej R.G."/>
            <person name="Champe M."/>
            <person name="Pfeiffer B.D."/>
            <person name="Wan K.H."/>
            <person name="Doyle C."/>
            <person name="Baxter E.G."/>
            <person name="Helt G."/>
            <person name="Nelson C.R."/>
            <person name="Miklos G.L.G."/>
            <person name="Abril J.F."/>
            <person name="Agbayani A."/>
            <person name="An H.-J."/>
            <person name="Andrews-Pfannkoch C."/>
            <person name="Baldwin D."/>
            <person name="Ballew R.M."/>
            <person name="Basu A."/>
            <person name="Baxendale J."/>
            <person name="Bayraktaroglu L."/>
            <person name="Beasley E.M."/>
            <person name="Beeson K.Y."/>
            <person name="Benos P.V."/>
            <person name="Berman B.P."/>
            <person name="Bhandari D."/>
            <person name="Bolshakov S."/>
            <person name="Borkova D."/>
            <person name="Botchan M.R."/>
            <person name="Bouck J."/>
            <person name="Brokstein P."/>
            <person name="Brottier P."/>
            <person name="Burtis K.C."/>
            <person name="Busam D.A."/>
            <person name="Butler H."/>
            <person name="Cadieu E."/>
            <person name="Center A."/>
            <person name="Chandra I."/>
            <person name="Cherry J.M."/>
            <person name="Cawley S."/>
            <person name="Dahlke C."/>
            <person name="Davenport L.B."/>
            <person name="Davies P."/>
            <person name="de Pablos B."/>
            <person name="Delcher A."/>
            <person name="Deng Z."/>
            <person name="Mays A.D."/>
            <person name="Dew I."/>
            <person name="Dietz S.M."/>
            <person name="Dodson K."/>
            <person name="Doup L.E."/>
            <person name="Downes M."/>
            <person name="Dugan-Rocha S."/>
            <person name="Dunkov B.C."/>
            <person name="Dunn P."/>
            <person name="Durbin K.J."/>
            <person name="Evangelista C.C."/>
            <person name="Ferraz C."/>
            <person name="Ferriera S."/>
            <person name="Fleischmann W."/>
            <person name="Fosler C."/>
            <person name="Gabrielian A.E."/>
            <person name="Garg N.S."/>
            <person name="Gelbart W.M."/>
            <person name="Glasser K."/>
            <person name="Glodek A."/>
            <person name="Gong F."/>
            <person name="Gorrell J.H."/>
            <person name="Gu Z."/>
            <person name="Guan P."/>
            <person name="Harris M."/>
            <person name="Harris N.L."/>
            <person name="Harvey D.A."/>
            <person name="Heiman T.J."/>
            <person name="Hernandez J.R."/>
            <person name="Houck J."/>
            <person name="Hostin D."/>
            <person name="Houston K.A."/>
            <person name="Howland T.J."/>
            <person name="Wei M.-H."/>
            <person name="Ibegwam C."/>
            <person name="Jalali M."/>
            <person name="Kalush F."/>
            <person name="Karpen G.H."/>
            <person name="Ke Z."/>
            <person name="Kennison J.A."/>
            <person name="Ketchum K.A."/>
            <person name="Kimmel B.E."/>
            <person name="Kodira C.D."/>
            <person name="Kraft C.L."/>
            <person name="Kravitz S."/>
            <person name="Kulp D."/>
            <person name="Lai Z."/>
            <person name="Lasko P."/>
            <person name="Lei Y."/>
            <person name="Levitsky A.A."/>
            <person name="Li J.H."/>
            <person name="Li Z."/>
            <person name="Liang Y."/>
            <person name="Lin X."/>
            <person name="Liu X."/>
            <person name="Mattei B."/>
            <person name="McIntosh T.C."/>
            <person name="McLeod M.P."/>
            <person name="McPherson D."/>
            <person name="Merkulov G."/>
            <person name="Milshina N.V."/>
            <person name="Mobarry C."/>
            <person name="Morris J."/>
            <person name="Moshrefi A."/>
            <person name="Mount S.M."/>
            <person name="Moy M."/>
            <person name="Murphy B."/>
            <person name="Murphy L."/>
            <person name="Muzny D.M."/>
            <person name="Nelson D.L."/>
            <person name="Nelson D.R."/>
            <person name="Nelson K.A."/>
            <person name="Nixon K."/>
            <person name="Nusskern D.R."/>
            <person name="Pacleb J.M."/>
            <person name="Palazzolo M."/>
            <person name="Pittman G.S."/>
            <person name="Pan S."/>
            <person name="Pollard J."/>
            <person name="Puri V."/>
            <person name="Reese M.G."/>
            <person name="Reinert K."/>
            <person name="Remington K."/>
            <person name="Saunders R.D.C."/>
            <person name="Scheeler F."/>
            <person name="Shen H."/>
            <person name="Shue B.C."/>
            <person name="Siden-Kiamos I."/>
            <person name="Simpson M."/>
            <person name="Skupski M.P."/>
            <person name="Smith T.J."/>
            <person name="Spier E."/>
            <person name="Spradling A.C."/>
            <person name="Stapleton M."/>
            <person name="Strong R."/>
            <person name="Sun E."/>
            <person name="Svirskas R."/>
            <person name="Tector C."/>
            <person name="Turner R."/>
            <person name="Venter E."/>
            <person name="Wang A.H."/>
            <person name="Wang X."/>
            <person name="Wang Z.-Y."/>
            <person name="Wassarman D.A."/>
            <person name="Weinstock G.M."/>
            <person name="Weissenbach J."/>
            <person name="Williams S.M."/>
            <person name="Woodage T."/>
            <person name="Worley K.C."/>
            <person name="Wu D."/>
            <person name="Yang S."/>
            <person name="Yao Q.A."/>
            <person name="Ye J."/>
            <person name="Yeh R.-F."/>
            <person name="Zaveri J.S."/>
            <person name="Zhan M."/>
            <person name="Zhang G."/>
            <person name="Zhao Q."/>
            <person name="Zheng L."/>
            <person name="Zheng X.H."/>
            <person name="Zhong F.N."/>
            <person name="Zhong W."/>
            <person name="Zhou X."/>
            <person name="Zhu S.C."/>
            <person name="Zhu X."/>
            <person name="Smith H.O."/>
            <person name="Gibbs R.A."/>
            <person name="Myers E.W."/>
            <person name="Rubin G.M."/>
            <person name="Venter J.C."/>
        </authorList>
    </citation>
    <scope>NUCLEOTIDE SEQUENCE [LARGE SCALE GENOMIC DNA]</scope>
    <source>
        <strain>Berkeley</strain>
    </source>
</reference>
<reference key="2">
    <citation type="journal article" date="2002" name="Genome Biol.">
        <title>Annotation of the Drosophila melanogaster euchromatic genome: a systematic review.</title>
        <authorList>
            <person name="Misra S."/>
            <person name="Crosby M.A."/>
            <person name="Mungall C.J."/>
            <person name="Matthews B.B."/>
            <person name="Campbell K.S."/>
            <person name="Hradecky P."/>
            <person name="Huang Y."/>
            <person name="Kaminker J.S."/>
            <person name="Millburn G.H."/>
            <person name="Prochnik S.E."/>
            <person name="Smith C.D."/>
            <person name="Tupy J.L."/>
            <person name="Whitfield E.J."/>
            <person name="Bayraktaroglu L."/>
            <person name="Berman B.P."/>
            <person name="Bettencourt B.R."/>
            <person name="Celniker S.E."/>
            <person name="de Grey A.D.N.J."/>
            <person name="Drysdale R.A."/>
            <person name="Harris N.L."/>
            <person name="Richter J."/>
            <person name="Russo S."/>
            <person name="Schroeder A.J."/>
            <person name="Shu S.Q."/>
            <person name="Stapleton M."/>
            <person name="Yamada C."/>
            <person name="Ashburner M."/>
            <person name="Gelbart W.M."/>
            <person name="Rubin G.M."/>
            <person name="Lewis S.E."/>
        </authorList>
    </citation>
    <scope>GENOME REANNOTATION</scope>
    <source>
        <strain>Berkeley</strain>
    </source>
</reference>
<reference key="3">
    <citation type="journal article" date="2002" name="Genome Biol.">
        <title>A Drosophila full-length cDNA resource.</title>
        <authorList>
            <person name="Stapleton M."/>
            <person name="Carlson J.W."/>
            <person name="Brokstein P."/>
            <person name="Yu C."/>
            <person name="Champe M."/>
            <person name="George R.A."/>
            <person name="Guarin H."/>
            <person name="Kronmiller B."/>
            <person name="Pacleb J.M."/>
            <person name="Park S."/>
            <person name="Wan K.H."/>
            <person name="Rubin G.M."/>
            <person name="Celniker S.E."/>
        </authorList>
    </citation>
    <scope>NUCLEOTIDE SEQUENCE [LARGE SCALE MRNA]</scope>
    <source>
        <strain>Berkeley</strain>
        <tissue>Embryo</tissue>
    </source>
</reference>
<accession>Q9V9Z1</accession>
<comment type="function">
    <text evidence="1">Component of the mitochondrial large ribosomal subunit (mt-LSU). The mitochondrial ribosome (mitoribosome) is a large ribonucleoprotein complex responsible for the synthesis of proteins inside mitochondria.</text>
</comment>
<comment type="subunit">
    <text evidence="1">Component of the mitochondrial large ribosomal subunit (mt-LSU).</text>
</comment>
<comment type="subcellular location">
    <subcellularLocation>
        <location evidence="1">Mitochondrion</location>
    </subcellularLocation>
</comment>
<comment type="similarity">
    <text evidence="3">Belongs to the bacterial ribosomal protein bL32 family.</text>
</comment>
<proteinExistence type="evidence at transcript level"/>
<dbReference type="EMBL" id="AE014297">
    <property type="protein sequence ID" value="AAF57137.1"/>
    <property type="molecule type" value="Genomic_DNA"/>
</dbReference>
<dbReference type="EMBL" id="AY118962">
    <property type="protein sequence ID" value="AAM50822.1"/>
    <property type="molecule type" value="mRNA"/>
</dbReference>
<dbReference type="RefSeq" id="NP_524606.1">
    <property type="nucleotide sequence ID" value="NM_079867.3"/>
</dbReference>
<dbReference type="SMR" id="Q9V9Z1"/>
<dbReference type="BioGRID" id="68543">
    <property type="interactions" value="8"/>
</dbReference>
<dbReference type="DIP" id="DIP-20496N"/>
<dbReference type="FunCoup" id="Q9V9Z1">
    <property type="interactions" value="434"/>
</dbReference>
<dbReference type="IntAct" id="Q9V9Z1">
    <property type="interactions" value="20"/>
</dbReference>
<dbReference type="STRING" id="7227.FBpp0085121"/>
<dbReference type="PaxDb" id="7227-FBpp0085121"/>
<dbReference type="DNASU" id="43698"/>
<dbReference type="EnsemblMetazoa" id="FBtr0085759">
    <property type="protein sequence ID" value="FBpp0085121"/>
    <property type="gene ID" value="FBgn0039835"/>
</dbReference>
<dbReference type="GeneID" id="43698"/>
<dbReference type="KEGG" id="dme:Dmel_CG12220"/>
<dbReference type="AGR" id="FB:FBgn0039835"/>
<dbReference type="CTD" id="64983"/>
<dbReference type="FlyBase" id="FBgn0039835">
    <property type="gene designation" value="mRpL32"/>
</dbReference>
<dbReference type="VEuPathDB" id="VectorBase:FBgn0039835"/>
<dbReference type="eggNOG" id="KOG4080">
    <property type="taxonomic scope" value="Eukaryota"/>
</dbReference>
<dbReference type="GeneTree" id="ENSGT00390000014996"/>
<dbReference type="HOGENOM" id="CLU_116455_0_0_1"/>
<dbReference type="InParanoid" id="Q9V9Z1"/>
<dbReference type="OMA" id="VLCPHCY"/>
<dbReference type="OrthoDB" id="2014905at2759"/>
<dbReference type="PhylomeDB" id="Q9V9Z1"/>
<dbReference type="Reactome" id="R-DME-5389840">
    <property type="pathway name" value="Mitochondrial translation elongation"/>
</dbReference>
<dbReference type="Reactome" id="R-DME-5419276">
    <property type="pathway name" value="Mitochondrial translation termination"/>
</dbReference>
<dbReference type="Reactome" id="R-DME-9837999">
    <property type="pathway name" value="Mitochondrial protein degradation"/>
</dbReference>
<dbReference type="BioGRID-ORCS" id="43698">
    <property type="hits" value="0 hits in 1 CRISPR screen"/>
</dbReference>
<dbReference type="GenomeRNAi" id="43698"/>
<dbReference type="PRO" id="PR:Q9V9Z1"/>
<dbReference type="Proteomes" id="UP000000803">
    <property type="component" value="Chromosome 3R"/>
</dbReference>
<dbReference type="Bgee" id="FBgn0039835">
    <property type="expression patterns" value="Expressed in adult middle midgut class II enteroendocrine cell in adult midgut (Drosophila) and 81 other cell types or tissues"/>
</dbReference>
<dbReference type="GO" id="GO:0005762">
    <property type="term" value="C:mitochondrial large ribosomal subunit"/>
    <property type="evidence" value="ECO:0000250"/>
    <property type="project" value="FlyBase"/>
</dbReference>
<dbReference type="GO" id="GO:0046872">
    <property type="term" value="F:metal ion binding"/>
    <property type="evidence" value="ECO:0007669"/>
    <property type="project" value="UniProtKB-KW"/>
</dbReference>
<dbReference type="GO" id="GO:0003735">
    <property type="term" value="F:structural constituent of ribosome"/>
    <property type="evidence" value="ECO:0000250"/>
    <property type="project" value="FlyBase"/>
</dbReference>
<dbReference type="GO" id="GO:0032543">
    <property type="term" value="P:mitochondrial translation"/>
    <property type="evidence" value="ECO:0000304"/>
    <property type="project" value="FlyBase"/>
</dbReference>
<dbReference type="InterPro" id="IPR051991">
    <property type="entry name" value="Mitoribosomal_protein_bL32"/>
</dbReference>
<dbReference type="InterPro" id="IPR011332">
    <property type="entry name" value="Ribosomal_zn-bd"/>
</dbReference>
<dbReference type="PANTHER" id="PTHR21026">
    <property type="entry name" value="39S RIBOSOMAL PROTEIN L32, MITOCHONDRIAL"/>
    <property type="match status" value="1"/>
</dbReference>
<dbReference type="PANTHER" id="PTHR21026:SF2">
    <property type="entry name" value="LARGE RIBOSOMAL SUBUNIT PROTEIN BL32M"/>
    <property type="match status" value="1"/>
</dbReference>
<dbReference type="SUPFAM" id="SSF57829">
    <property type="entry name" value="Zn-binding ribosomal proteins"/>
    <property type="match status" value="1"/>
</dbReference>
<keyword id="KW-0479">Metal-binding</keyword>
<keyword id="KW-0496">Mitochondrion</keyword>
<keyword id="KW-1185">Reference proteome</keyword>
<keyword id="KW-0687">Ribonucleoprotein</keyword>
<keyword id="KW-0689">Ribosomal protein</keyword>
<keyword id="KW-0809">Transit peptide</keyword>
<keyword id="KW-0862">Zinc</keyword>
<evidence type="ECO:0000250" key="1">
    <source>
        <dbReference type="UniProtKB" id="Q9BYC8"/>
    </source>
</evidence>
<evidence type="ECO:0000255" key="2"/>
<evidence type="ECO:0000305" key="3"/>
<feature type="transit peptide" description="Mitochondrion" evidence="2">
    <location>
        <begin position="1"/>
        <end status="unknown"/>
    </location>
</feature>
<feature type="chain" id="PRO_0000030515" description="Large ribosomal subunit protein bL32m">
    <location>
        <begin status="unknown"/>
        <end position="195"/>
    </location>
</feature>
<feature type="binding site" evidence="1">
    <location>
        <position position="95"/>
    </location>
    <ligand>
        <name>Zn(2+)</name>
        <dbReference type="ChEBI" id="CHEBI:29105"/>
    </ligand>
</feature>
<feature type="binding site" evidence="1">
    <location>
        <position position="98"/>
    </location>
    <ligand>
        <name>Zn(2+)</name>
        <dbReference type="ChEBI" id="CHEBI:29105"/>
    </ligand>
</feature>
<feature type="binding site" evidence="1">
    <location>
        <position position="108"/>
    </location>
    <ligand>
        <name>Zn(2+)</name>
        <dbReference type="ChEBI" id="CHEBI:29105"/>
    </ligand>
</feature>
<feature type="binding site" evidence="1">
    <location>
        <position position="111"/>
    </location>
    <ligand>
        <name>Zn(2+)</name>
        <dbReference type="ChEBI" id="CHEBI:29105"/>
    </ligand>
</feature>
<name>RM32_DROME</name>
<protein>
    <recommendedName>
        <fullName evidence="3">Large ribosomal subunit protein bL32m</fullName>
    </recommendedName>
    <alternativeName>
        <fullName>39S ribosomal protein L32, mitochondrial</fullName>
        <shortName>L32mt</shortName>
        <shortName>MRP-L32</shortName>
    </alternativeName>
</protein>
<organism>
    <name type="scientific">Drosophila melanogaster</name>
    <name type="common">Fruit fly</name>
    <dbReference type="NCBI Taxonomy" id="7227"/>
    <lineage>
        <taxon>Eukaryota</taxon>
        <taxon>Metazoa</taxon>
        <taxon>Ecdysozoa</taxon>
        <taxon>Arthropoda</taxon>
        <taxon>Hexapoda</taxon>
        <taxon>Insecta</taxon>
        <taxon>Pterygota</taxon>
        <taxon>Neoptera</taxon>
        <taxon>Endopterygota</taxon>
        <taxon>Diptera</taxon>
        <taxon>Brachycera</taxon>
        <taxon>Muscomorpha</taxon>
        <taxon>Ephydroidea</taxon>
        <taxon>Drosophilidae</taxon>
        <taxon>Drosophila</taxon>
        <taxon>Sophophora</taxon>
    </lineage>
</organism>